<feature type="chain" id="PRO_0000262774" description="Dynein axonemal intermediate chain 4">
    <location>
        <begin position="1"/>
        <end position="803"/>
    </location>
</feature>
<feature type="repeat" description="WD 1" evidence="3">
    <location>
        <begin position="492"/>
        <end position="532"/>
    </location>
</feature>
<feature type="repeat" description="WD 2" evidence="3">
    <location>
        <begin position="541"/>
        <end position="589"/>
    </location>
</feature>
<feature type="repeat" description="WD 3" evidence="3">
    <location>
        <begin position="616"/>
        <end position="656"/>
    </location>
</feature>
<feature type="repeat" description="WD 4" evidence="3">
    <location>
        <begin position="660"/>
        <end position="700"/>
    </location>
</feature>
<feature type="repeat" description="WD 5" evidence="3">
    <location>
        <begin position="703"/>
        <end position="742"/>
    </location>
</feature>
<feature type="repeat" description="WD 6" evidence="3">
    <location>
        <begin position="748"/>
        <end position="787"/>
    </location>
</feature>
<feature type="region of interest" description="Disordered" evidence="4">
    <location>
        <begin position="1"/>
        <end position="41"/>
    </location>
</feature>
<feature type="region of interest" description="Disordered" evidence="4">
    <location>
        <begin position="88"/>
        <end position="109"/>
    </location>
</feature>
<feature type="region of interest" description="Disordered" evidence="4">
    <location>
        <begin position="143"/>
        <end position="163"/>
    </location>
</feature>
<feature type="compositionally biased region" description="Polar residues" evidence="4">
    <location>
        <begin position="1"/>
        <end position="33"/>
    </location>
</feature>
<feature type="compositionally biased region" description="Low complexity" evidence="4">
    <location>
        <begin position="143"/>
        <end position="155"/>
    </location>
</feature>
<keyword id="KW-0966">Cell projection</keyword>
<keyword id="KW-0969">Cilium</keyword>
<keyword id="KW-0963">Cytoplasm</keyword>
<keyword id="KW-0206">Cytoskeleton</keyword>
<keyword id="KW-0282">Flagellum</keyword>
<keyword id="KW-1185">Reference proteome</keyword>
<keyword id="KW-0677">Repeat</keyword>
<keyword id="KW-0853">WD repeat</keyword>
<evidence type="ECO:0000250" key="1">
    <source>
        <dbReference type="UniProtKB" id="E9PYY5"/>
    </source>
</evidence>
<evidence type="ECO:0000250" key="2">
    <source>
        <dbReference type="UniProtKB" id="Q6GPB9"/>
    </source>
</evidence>
<evidence type="ECO:0000255" key="3"/>
<evidence type="ECO:0000256" key="4">
    <source>
        <dbReference type="SAM" id="MobiDB-lite"/>
    </source>
</evidence>
<evidence type="ECO:0000305" key="5"/>
<evidence type="ECO:0000312" key="6">
    <source>
        <dbReference type="RGD" id="1311027"/>
    </source>
</evidence>
<name>DNAI4_RAT</name>
<dbReference type="EMBL" id="BC083631">
    <property type="protein sequence ID" value="AAH83631.1"/>
    <property type="molecule type" value="mRNA"/>
</dbReference>
<dbReference type="EMBL" id="BC097402">
    <property type="protein sequence ID" value="AAH97402.1"/>
    <property type="molecule type" value="mRNA"/>
</dbReference>
<dbReference type="RefSeq" id="NP_001019957.1">
    <property type="nucleotide sequence ID" value="NM_001024786.2"/>
</dbReference>
<dbReference type="SMR" id="Q4V8G4"/>
<dbReference type="FunCoup" id="Q4V8G4">
    <property type="interactions" value="582"/>
</dbReference>
<dbReference type="STRING" id="10116.ENSRNOP00000048851"/>
<dbReference type="GlyGen" id="Q4V8G4">
    <property type="glycosylation" value="1 site"/>
</dbReference>
<dbReference type="iPTMnet" id="Q4V8G4"/>
<dbReference type="PhosphoSitePlus" id="Q4V8G4"/>
<dbReference type="PaxDb" id="10116-ENSRNOP00000048851"/>
<dbReference type="GeneID" id="313417"/>
<dbReference type="KEGG" id="rno:313417"/>
<dbReference type="UCSC" id="RGD:1311027">
    <property type="organism name" value="rat"/>
</dbReference>
<dbReference type="AGR" id="RGD:1311027"/>
<dbReference type="CTD" id="79819"/>
<dbReference type="RGD" id="1311027">
    <property type="gene designation" value="Dnai4"/>
</dbReference>
<dbReference type="VEuPathDB" id="HostDB:ENSRNOG00000006999"/>
<dbReference type="eggNOG" id="ENOG502QWGI">
    <property type="taxonomic scope" value="Eukaryota"/>
</dbReference>
<dbReference type="HOGENOM" id="CLU_015820_0_0_1"/>
<dbReference type="InParanoid" id="Q4V8G4"/>
<dbReference type="OrthoDB" id="80084at9989"/>
<dbReference type="PhylomeDB" id="Q4V8G4"/>
<dbReference type="TreeFam" id="TF300553"/>
<dbReference type="PRO" id="PR:Q4V8G4"/>
<dbReference type="Proteomes" id="UP000002494">
    <property type="component" value="Chromosome 5"/>
</dbReference>
<dbReference type="Bgee" id="ENSRNOG00000006999">
    <property type="expression patterns" value="Expressed in testis and 19 other cell types or tissues"/>
</dbReference>
<dbReference type="GO" id="GO:0005858">
    <property type="term" value="C:axonemal dynein complex"/>
    <property type="evidence" value="ECO:0000250"/>
    <property type="project" value="UniProtKB"/>
</dbReference>
<dbReference type="GO" id="GO:0005930">
    <property type="term" value="C:axoneme"/>
    <property type="evidence" value="ECO:0000250"/>
    <property type="project" value="UniProtKB"/>
</dbReference>
<dbReference type="GO" id="GO:0120293">
    <property type="term" value="C:dynein axonemal particle"/>
    <property type="evidence" value="ECO:0000250"/>
    <property type="project" value="UniProtKB"/>
</dbReference>
<dbReference type="GO" id="GO:0031514">
    <property type="term" value="C:motile cilium"/>
    <property type="evidence" value="ECO:0000250"/>
    <property type="project" value="UniProtKB"/>
</dbReference>
<dbReference type="GO" id="GO:0045504">
    <property type="term" value="F:dynein heavy chain binding"/>
    <property type="evidence" value="ECO:0000318"/>
    <property type="project" value="GO_Central"/>
</dbReference>
<dbReference type="GO" id="GO:0045503">
    <property type="term" value="F:dynein light chain binding"/>
    <property type="evidence" value="ECO:0000318"/>
    <property type="project" value="GO_Central"/>
</dbReference>
<dbReference type="GO" id="GO:0070286">
    <property type="term" value="P:axonemal dynein complex assembly"/>
    <property type="evidence" value="ECO:0000250"/>
    <property type="project" value="UniProtKB"/>
</dbReference>
<dbReference type="GO" id="GO:0003341">
    <property type="term" value="P:cilium movement"/>
    <property type="evidence" value="ECO:0000250"/>
    <property type="project" value="UniProtKB"/>
</dbReference>
<dbReference type="GO" id="GO:0002244">
    <property type="term" value="P:hematopoietic progenitor cell differentiation"/>
    <property type="evidence" value="ECO:0000266"/>
    <property type="project" value="RGD"/>
</dbReference>
<dbReference type="FunFam" id="2.130.10.10:FF:000373">
    <property type="entry name" value="WD repeat domain 78"/>
    <property type="match status" value="1"/>
</dbReference>
<dbReference type="FunFam" id="2.130.10.10:FF:002939">
    <property type="entry name" value="WD repeat-containing protein 78"/>
    <property type="match status" value="1"/>
</dbReference>
<dbReference type="Gene3D" id="2.130.10.10">
    <property type="entry name" value="YVTN repeat-like/Quinoprotein amine dehydrogenase"/>
    <property type="match status" value="2"/>
</dbReference>
<dbReference type="InterPro" id="IPR050687">
    <property type="entry name" value="Dynein_IC"/>
</dbReference>
<dbReference type="InterPro" id="IPR015943">
    <property type="entry name" value="WD40/YVTN_repeat-like_dom_sf"/>
</dbReference>
<dbReference type="InterPro" id="IPR036322">
    <property type="entry name" value="WD40_repeat_dom_sf"/>
</dbReference>
<dbReference type="InterPro" id="IPR001680">
    <property type="entry name" value="WD40_rpt"/>
</dbReference>
<dbReference type="PANTHER" id="PTHR12442:SF12">
    <property type="entry name" value="DYNEIN AXONEMAL INTERMEDIATE CHAIN 4"/>
    <property type="match status" value="1"/>
</dbReference>
<dbReference type="PANTHER" id="PTHR12442">
    <property type="entry name" value="DYNEIN INTERMEDIATE CHAIN"/>
    <property type="match status" value="1"/>
</dbReference>
<dbReference type="Pfam" id="PF00400">
    <property type="entry name" value="WD40"/>
    <property type="match status" value="2"/>
</dbReference>
<dbReference type="SMART" id="SM00320">
    <property type="entry name" value="WD40"/>
    <property type="match status" value="5"/>
</dbReference>
<dbReference type="SUPFAM" id="SSF50978">
    <property type="entry name" value="WD40 repeat-like"/>
    <property type="match status" value="1"/>
</dbReference>
<dbReference type="PROSITE" id="PS50082">
    <property type="entry name" value="WD_REPEATS_2"/>
    <property type="match status" value="2"/>
</dbReference>
<dbReference type="PROSITE" id="PS50294">
    <property type="entry name" value="WD_REPEATS_REGION"/>
    <property type="match status" value="1"/>
</dbReference>
<sequence length="803" mass="90198">MPSSPTSTRKQTNFTASVSAQSRKSISFGNPKSTGGKGYAGANQSKIVASRTMTFLPEMKPAEKLNIASAKLVQVLDPRGVDVTPRPLYHPDPHAMPTKPSKLLTSQEGSMGSDYISSYSLYQNTLNPSMLGQYTRSVIGSSSTVSKSSISTTESMTEDLEDPSYKRDRLASFADVRVMRAPAEAAITKEELERNVEIFLMETETLRFFDLPTVMISTDSEEAEKVIEKNINYEILCRNRLGNDLYVERMMQTFNGAPKNKDVQCDKIIMEEKGVMATTWDLYDSFNIPEASLAAKRSAYLSKASLLVRDRDPKIQDSESSSLMDIESVILAKSHEDEEDNSEKILKSDKLHQDLFYMERVLMENVFQPKLAAYRQLPIYKELEPGQPEEDLQVVNKVTEDEVKKDEEEEMETELEIEITTEQSTIPANLERLWSFSCDLTKGLNVSSLSWNKANSDLLAVGYGNFGFKEQKRGMACCWSIKNPMWPERIYQSPYGVTSVDFSISSPNLLAVGYHNGTVAIYNVQSNHNTPVLDSSESPQKHLGPVWQVQWIEQDRGTTGDDRREILVSISADGRISKWVIRKGLDCHDLMHLKRTTVTSSKKGIEKEKKGEALISRQAPGMCFAFHTKDTNIYLAGTEEGLIHKCSCSYNEQYLETYRGHKGPVYKVTWNPFCPDVFLSCSADWGVMIWHQDNVKPFFTFYPTTYVVYDVAWSPKSAYIFAAANENRVEIWDLQISTLDPLIVNVANPGIKFTTVLFAKQTDCLLVGDSDGQVAVYELRNMPTPTESGRGDVINVLLGPKAN</sequence>
<protein>
    <recommendedName>
        <fullName evidence="5">Dynein axonemal intermediate chain 4</fullName>
    </recommendedName>
    <alternativeName>
        <fullName>WD repeat-containing protein 78</fullName>
    </alternativeName>
</protein>
<organism>
    <name type="scientific">Rattus norvegicus</name>
    <name type="common">Rat</name>
    <dbReference type="NCBI Taxonomy" id="10116"/>
    <lineage>
        <taxon>Eukaryota</taxon>
        <taxon>Metazoa</taxon>
        <taxon>Chordata</taxon>
        <taxon>Craniata</taxon>
        <taxon>Vertebrata</taxon>
        <taxon>Euteleostomi</taxon>
        <taxon>Mammalia</taxon>
        <taxon>Eutheria</taxon>
        <taxon>Euarchontoglires</taxon>
        <taxon>Glires</taxon>
        <taxon>Rodentia</taxon>
        <taxon>Myomorpha</taxon>
        <taxon>Muroidea</taxon>
        <taxon>Muridae</taxon>
        <taxon>Murinae</taxon>
        <taxon>Rattus</taxon>
    </lineage>
</organism>
<reference key="1">
    <citation type="journal article" date="2004" name="Genome Res.">
        <title>The status, quality, and expansion of the NIH full-length cDNA project: the Mammalian Gene Collection (MGC).</title>
        <authorList>
            <consortium name="The MGC Project Team"/>
        </authorList>
    </citation>
    <scope>NUCLEOTIDE SEQUENCE [LARGE SCALE MRNA]</scope>
    <source>
        <tissue>Testis</tissue>
    </source>
</reference>
<accession>Q4V8G4</accession>
<accession>Q5XIP5</accession>
<gene>
    <name evidence="6" type="primary">Dnai4</name>
    <name type="synonym">Wdr78</name>
</gene>
<proteinExistence type="evidence at transcript level"/>
<comment type="function">
    <text evidence="1">Plays a critical role in the assembly of axonemal dynein complex, thereby playing a role in ciliary motility.</text>
</comment>
<comment type="subunit">
    <text evidence="1">Part of the multisubunit axonemal dynein complex formed at least of two heavy chains and a number of intermediate and light chains. Associated with axonemal dynein subunits such as, DNAH2, DNAI3, and DYNLT1. Interacts with DYNLT1.</text>
</comment>
<comment type="subcellular location">
    <subcellularLocation>
        <location evidence="1">Cytoplasm</location>
        <location evidence="1">Cytoskeleton</location>
        <location evidence="1">Flagellum axoneme</location>
    </subcellularLocation>
    <subcellularLocation>
        <location evidence="1">Cytoplasm</location>
        <location evidence="1">Cytoskeleton</location>
        <location evidence="1">Cilium axoneme</location>
    </subcellularLocation>
    <subcellularLocation>
        <location evidence="2">Dynein axonemal particle</location>
    </subcellularLocation>
</comment>